<evidence type="ECO:0000250" key="1">
    <source>
        <dbReference type="UniProtKB" id="K7UTH7"/>
    </source>
</evidence>
<evidence type="ECO:0000250" key="2">
    <source>
        <dbReference type="UniProtKB" id="P06616"/>
    </source>
</evidence>
<evidence type="ECO:0000255" key="3"/>
<evidence type="ECO:0000255" key="4">
    <source>
        <dbReference type="PROSITE-ProRule" id="PRU00118"/>
    </source>
</evidence>
<evidence type="ECO:0000255" key="5">
    <source>
        <dbReference type="PROSITE-ProRule" id="PRU01050"/>
    </source>
</evidence>
<evidence type="ECO:0000305" key="6"/>
<evidence type="ECO:0000312" key="7">
    <source>
        <dbReference type="Araport" id="AT5G66470"/>
    </source>
</evidence>
<evidence type="ECO:0000312" key="8">
    <source>
        <dbReference type="EMBL" id="AAL38371.1"/>
    </source>
</evidence>
<organism>
    <name type="scientific">Arabidopsis thaliana</name>
    <name type="common">Mouse-ear cress</name>
    <dbReference type="NCBI Taxonomy" id="3702"/>
    <lineage>
        <taxon>Eukaryota</taxon>
        <taxon>Viridiplantae</taxon>
        <taxon>Streptophyta</taxon>
        <taxon>Embryophyta</taxon>
        <taxon>Tracheophyta</taxon>
        <taxon>Spermatophyta</taxon>
        <taxon>Magnoliopsida</taxon>
        <taxon>eudicotyledons</taxon>
        <taxon>Gunneridae</taxon>
        <taxon>Pentapetalae</taxon>
        <taxon>rosids</taxon>
        <taxon>malvids</taxon>
        <taxon>Brassicales</taxon>
        <taxon>Brassicaceae</taxon>
        <taxon>Camelineae</taxon>
        <taxon>Arabidopsis</taxon>
    </lineage>
</organism>
<accession>Q8VZ74</accession>
<accession>Q9FJZ2</accession>
<proteinExistence type="evidence at transcript level"/>
<comment type="function">
    <text evidence="1">Nuclear genome-encoded probable GTPase involved in ribosome biogenesis in chloroplasts. Plays a role in 16S rRNA maturation in plastids and may contribute to the assembly of the small (30S) ribosomal subunit.</text>
</comment>
<comment type="subcellular location">
    <subcellularLocation>
        <location evidence="1">Plastid</location>
        <location evidence="1">Chloroplast stroma</location>
        <location evidence="1">Chloroplast nucleoid</location>
    </subcellularLocation>
</comment>
<comment type="similarity">
    <text evidence="5">Belongs to the TRAFAC class TrmE-Era-EngA-EngB-Septin-like GTPase superfamily. Era GTPase family.</text>
</comment>
<comment type="sequence caution" evidence="6">
    <conflict type="erroneous gene model prediction">
        <sequence resource="EMBL-CDS" id="BAB10923"/>
    </conflict>
</comment>
<feature type="transit peptide" description="Chloroplast" evidence="3">
    <location>
        <begin position="1"/>
        <end position="39"/>
    </location>
</feature>
<feature type="chain" id="PRO_0000441335" description="GTPase ERA-like, chloroplastic">
    <location>
        <begin position="40"/>
        <end position="427"/>
    </location>
</feature>
<feature type="domain" description="Era-type G" evidence="5">
    <location>
        <begin position="128"/>
        <end position="298"/>
    </location>
</feature>
<feature type="domain" description="KH type-2" evidence="4">
    <location>
        <begin position="329"/>
        <end position="406"/>
    </location>
</feature>
<feature type="region of interest" description="G1" evidence="5">
    <location>
        <begin position="136"/>
        <end position="143"/>
    </location>
</feature>
<feature type="region of interest" description="G2" evidence="5">
    <location>
        <begin position="162"/>
        <end position="166"/>
    </location>
</feature>
<feature type="region of interest" description="G3" evidence="5">
    <location>
        <begin position="183"/>
        <end position="186"/>
    </location>
</feature>
<feature type="region of interest" description="G4" evidence="5">
    <location>
        <begin position="248"/>
        <end position="251"/>
    </location>
</feature>
<feature type="region of interest" description="G5" evidence="5">
    <location>
        <begin position="277"/>
        <end position="279"/>
    </location>
</feature>
<feature type="binding site" evidence="2">
    <location>
        <begin position="136"/>
        <end position="143"/>
    </location>
    <ligand>
        <name>GTP</name>
        <dbReference type="ChEBI" id="CHEBI:37565"/>
    </ligand>
</feature>
<feature type="binding site" evidence="2">
    <location>
        <begin position="183"/>
        <end position="187"/>
    </location>
    <ligand>
        <name>GTP</name>
        <dbReference type="ChEBI" id="CHEBI:37565"/>
    </ligand>
</feature>
<feature type="binding site" evidence="2">
    <location>
        <begin position="248"/>
        <end position="251"/>
    </location>
    <ligand>
        <name>GTP</name>
        <dbReference type="ChEBI" id="CHEBI:37565"/>
    </ligand>
</feature>
<gene>
    <name evidence="7" type="ordered locus">At5g66470</name>
    <name evidence="8" type="ORF">K1F13.13</name>
</gene>
<reference key="1">
    <citation type="journal article" date="1998" name="DNA Res.">
        <title>Structural analysis of Arabidopsis thaliana chromosome 5. VI. Sequence features of the regions of 1,367,185 bp covered by 19 physically assigned P1 and TAC clones.</title>
        <authorList>
            <person name="Kotani H."/>
            <person name="Nakamura Y."/>
            <person name="Sato S."/>
            <person name="Asamizu E."/>
            <person name="Kaneko T."/>
            <person name="Miyajima N."/>
            <person name="Tabata S."/>
        </authorList>
    </citation>
    <scope>NUCLEOTIDE SEQUENCE [LARGE SCALE GENOMIC DNA]</scope>
    <source>
        <strain>cv. Columbia</strain>
    </source>
</reference>
<reference key="2">
    <citation type="journal article" date="2017" name="Plant J.">
        <title>Araport11: a complete reannotation of the Arabidopsis thaliana reference genome.</title>
        <authorList>
            <person name="Cheng C.Y."/>
            <person name="Krishnakumar V."/>
            <person name="Chan A.P."/>
            <person name="Thibaud-Nissen F."/>
            <person name="Schobel S."/>
            <person name="Town C.D."/>
        </authorList>
    </citation>
    <scope>GENOME REANNOTATION</scope>
    <source>
        <strain>cv. Columbia</strain>
    </source>
</reference>
<reference key="3">
    <citation type="journal article" date="2003" name="Science">
        <title>Empirical analysis of transcriptional activity in the Arabidopsis genome.</title>
        <authorList>
            <person name="Yamada K."/>
            <person name="Lim J."/>
            <person name="Dale J.M."/>
            <person name="Chen H."/>
            <person name="Shinn P."/>
            <person name="Palm C.J."/>
            <person name="Southwick A.M."/>
            <person name="Wu H.C."/>
            <person name="Kim C.J."/>
            <person name="Nguyen M."/>
            <person name="Pham P.K."/>
            <person name="Cheuk R.F."/>
            <person name="Karlin-Newmann G."/>
            <person name="Liu S.X."/>
            <person name="Lam B."/>
            <person name="Sakano H."/>
            <person name="Wu T."/>
            <person name="Yu G."/>
            <person name="Miranda M."/>
            <person name="Quach H.L."/>
            <person name="Tripp M."/>
            <person name="Chang C.H."/>
            <person name="Lee J.M."/>
            <person name="Toriumi M.J."/>
            <person name="Chan M.M."/>
            <person name="Tang C.C."/>
            <person name="Onodera C.S."/>
            <person name="Deng J.M."/>
            <person name="Akiyama K."/>
            <person name="Ansari Y."/>
            <person name="Arakawa T."/>
            <person name="Banh J."/>
            <person name="Banno F."/>
            <person name="Bowser L."/>
            <person name="Brooks S.Y."/>
            <person name="Carninci P."/>
            <person name="Chao Q."/>
            <person name="Choy N."/>
            <person name="Enju A."/>
            <person name="Goldsmith A.D."/>
            <person name="Gurjal M."/>
            <person name="Hansen N.F."/>
            <person name="Hayashizaki Y."/>
            <person name="Johnson-Hopson C."/>
            <person name="Hsuan V.W."/>
            <person name="Iida K."/>
            <person name="Karnes M."/>
            <person name="Khan S."/>
            <person name="Koesema E."/>
            <person name="Ishida J."/>
            <person name="Jiang P.X."/>
            <person name="Jones T."/>
            <person name="Kawai J."/>
            <person name="Kamiya A."/>
            <person name="Meyers C."/>
            <person name="Nakajima M."/>
            <person name="Narusaka M."/>
            <person name="Seki M."/>
            <person name="Sakurai T."/>
            <person name="Satou M."/>
            <person name="Tamse R."/>
            <person name="Vaysberg M."/>
            <person name="Wallender E.K."/>
            <person name="Wong C."/>
            <person name="Yamamura Y."/>
            <person name="Yuan S."/>
            <person name="Shinozaki K."/>
            <person name="Davis R.W."/>
            <person name="Theologis A."/>
            <person name="Ecker J.R."/>
        </authorList>
    </citation>
    <scope>NUCLEOTIDE SEQUENCE [LARGE SCALE MRNA]</scope>
    <source>
        <strain>cv. Columbia</strain>
    </source>
</reference>
<protein>
    <recommendedName>
        <fullName evidence="6">GTPase ERA-like, chloroplastic</fullName>
    </recommendedName>
    <alternativeName>
        <fullName evidence="6">GTP-binding protein Era-like</fullName>
    </alternativeName>
</protein>
<sequence length="427" mass="48931">MAVSPHISPTLSRYKFFSTSVVENPNFSPYRIYSRRRVTKSHLQAHNSTTSYGRTELSSSKKLWIRQRSFSEMEVEQAQLEDDEEQVEIDIVDEASLLSLSMKPDRNMALLDDYEMEELGHTPNTHHRSGYVAVVGMPNVGKSTLSNQMIGQKISIVTDKPQTTRHRILGICSSPEYQMILYDTPGVIEKKMHRLDTMMMKNVRDAAINADCVVILVDACKTPTNIEEVLKEGLGDLEKKPPMLLVMNKKDLIKPGEIAKKLEWYEKFTDVDEVIPVSAKYGHGIEDVKEWILSKLPFGPPYYPKDIVSEHPERFFVSEIVREKIFMQYRNEVPYACQVNVLSYKTRPAAKDFIQVEVVVDKNSQKIILIGKEGKALKTLATAARLDIEDFLQKKVFLEVEVKVKENWRQDEGLLKYYGYGGQIRAM</sequence>
<name>ERA_ARATH</name>
<dbReference type="EMBL" id="AB013389">
    <property type="protein sequence ID" value="BAB10923.1"/>
    <property type="status" value="ALT_SEQ"/>
    <property type="molecule type" value="Genomic_DNA"/>
</dbReference>
<dbReference type="EMBL" id="CP002688">
    <property type="protein sequence ID" value="AED98218.1"/>
    <property type="molecule type" value="Genomic_DNA"/>
</dbReference>
<dbReference type="EMBL" id="CP002688">
    <property type="protein sequence ID" value="ANM71024.1"/>
    <property type="molecule type" value="Genomic_DNA"/>
</dbReference>
<dbReference type="EMBL" id="AY065195">
    <property type="protein sequence ID" value="AAL38371.1"/>
    <property type="molecule type" value="mRNA"/>
</dbReference>
<dbReference type="EMBL" id="AY093245">
    <property type="protein sequence ID" value="AAM13244.1"/>
    <property type="molecule type" value="mRNA"/>
</dbReference>
<dbReference type="RefSeq" id="NP_001332584.1">
    <property type="nucleotide sequence ID" value="NM_001345764.1"/>
</dbReference>
<dbReference type="RefSeq" id="NP_201448.2">
    <property type="nucleotide sequence ID" value="NM_126045.6"/>
</dbReference>
<dbReference type="SMR" id="Q8VZ74"/>
<dbReference type="FunCoup" id="Q8VZ74">
    <property type="interactions" value="715"/>
</dbReference>
<dbReference type="IntAct" id="Q8VZ74">
    <property type="interactions" value="1"/>
</dbReference>
<dbReference type="STRING" id="3702.Q8VZ74"/>
<dbReference type="iPTMnet" id="Q8VZ74"/>
<dbReference type="PaxDb" id="3702-AT5G66470.1"/>
<dbReference type="ProteomicsDB" id="222264"/>
<dbReference type="EnsemblPlants" id="AT5G66470.1">
    <property type="protein sequence ID" value="AT5G66470.1"/>
    <property type="gene ID" value="AT5G66470"/>
</dbReference>
<dbReference type="EnsemblPlants" id="AT5G66470.2">
    <property type="protein sequence ID" value="AT5G66470.2"/>
    <property type="gene ID" value="AT5G66470"/>
</dbReference>
<dbReference type="GeneID" id="836779"/>
<dbReference type="Gramene" id="AT5G66470.1">
    <property type="protein sequence ID" value="AT5G66470.1"/>
    <property type="gene ID" value="AT5G66470"/>
</dbReference>
<dbReference type="Gramene" id="AT5G66470.2">
    <property type="protein sequence ID" value="AT5G66470.2"/>
    <property type="gene ID" value="AT5G66470"/>
</dbReference>
<dbReference type="KEGG" id="ath:AT5G66470"/>
<dbReference type="Araport" id="AT5G66470"/>
<dbReference type="TAIR" id="AT5G66470">
    <property type="gene designation" value="ERA-1"/>
</dbReference>
<dbReference type="eggNOG" id="KOG1423">
    <property type="taxonomic scope" value="Eukaryota"/>
</dbReference>
<dbReference type="HOGENOM" id="CLU_038009_1_3_1"/>
<dbReference type="InParanoid" id="Q8VZ74"/>
<dbReference type="OMA" id="WAEVDVI"/>
<dbReference type="PhylomeDB" id="Q8VZ74"/>
<dbReference type="PRO" id="PR:Q8VZ74"/>
<dbReference type="Proteomes" id="UP000006548">
    <property type="component" value="Chromosome 5"/>
</dbReference>
<dbReference type="ExpressionAtlas" id="Q8VZ74">
    <property type="expression patterns" value="baseline and differential"/>
</dbReference>
<dbReference type="GO" id="GO:0009507">
    <property type="term" value="C:chloroplast"/>
    <property type="evidence" value="ECO:0007005"/>
    <property type="project" value="TAIR"/>
</dbReference>
<dbReference type="GO" id="GO:0042644">
    <property type="term" value="C:chloroplast nucleoid"/>
    <property type="evidence" value="ECO:0000250"/>
    <property type="project" value="UniProtKB"/>
</dbReference>
<dbReference type="GO" id="GO:0005525">
    <property type="term" value="F:GTP binding"/>
    <property type="evidence" value="ECO:0007669"/>
    <property type="project" value="UniProtKB-KW"/>
</dbReference>
<dbReference type="GO" id="GO:0003729">
    <property type="term" value="F:mRNA binding"/>
    <property type="evidence" value="ECO:0000314"/>
    <property type="project" value="TAIR"/>
</dbReference>
<dbReference type="GO" id="GO:0042254">
    <property type="term" value="P:ribosome biogenesis"/>
    <property type="evidence" value="ECO:0000250"/>
    <property type="project" value="UniProtKB"/>
</dbReference>
<dbReference type="GO" id="GO:0006364">
    <property type="term" value="P:rRNA processing"/>
    <property type="evidence" value="ECO:0000250"/>
    <property type="project" value="UniProtKB"/>
</dbReference>
<dbReference type="CDD" id="cd04163">
    <property type="entry name" value="Era"/>
    <property type="match status" value="1"/>
</dbReference>
<dbReference type="CDD" id="cd22534">
    <property type="entry name" value="KH-II_Era"/>
    <property type="match status" value="1"/>
</dbReference>
<dbReference type="FunFam" id="3.30.300.20:FF:000003">
    <property type="entry name" value="GTPase Era"/>
    <property type="match status" value="1"/>
</dbReference>
<dbReference type="FunFam" id="3.40.50.300:FF:000094">
    <property type="entry name" value="GTPase Era"/>
    <property type="match status" value="1"/>
</dbReference>
<dbReference type="Gene3D" id="3.30.300.20">
    <property type="match status" value="1"/>
</dbReference>
<dbReference type="Gene3D" id="3.40.50.300">
    <property type="entry name" value="P-loop containing nucleotide triphosphate hydrolases"/>
    <property type="match status" value="1"/>
</dbReference>
<dbReference type="HAMAP" id="MF_00367">
    <property type="entry name" value="GTPase_Era"/>
    <property type="match status" value="1"/>
</dbReference>
<dbReference type="InterPro" id="IPR030388">
    <property type="entry name" value="G_ERA_dom"/>
</dbReference>
<dbReference type="InterPro" id="IPR006073">
    <property type="entry name" value="GTP-bd"/>
</dbReference>
<dbReference type="InterPro" id="IPR005662">
    <property type="entry name" value="GTPase_Era-like"/>
</dbReference>
<dbReference type="InterPro" id="IPR015946">
    <property type="entry name" value="KH_dom-like_a/b"/>
</dbReference>
<dbReference type="InterPro" id="IPR004044">
    <property type="entry name" value="KH_dom_type_2"/>
</dbReference>
<dbReference type="InterPro" id="IPR009019">
    <property type="entry name" value="KH_sf_prok-type"/>
</dbReference>
<dbReference type="InterPro" id="IPR027417">
    <property type="entry name" value="P-loop_NTPase"/>
</dbReference>
<dbReference type="InterPro" id="IPR005225">
    <property type="entry name" value="Small_GTP-bd"/>
</dbReference>
<dbReference type="NCBIfam" id="TIGR00436">
    <property type="entry name" value="era"/>
    <property type="match status" value="1"/>
</dbReference>
<dbReference type="NCBIfam" id="NF000908">
    <property type="entry name" value="PRK00089.1"/>
    <property type="match status" value="1"/>
</dbReference>
<dbReference type="NCBIfam" id="TIGR00231">
    <property type="entry name" value="small_GTP"/>
    <property type="match status" value="1"/>
</dbReference>
<dbReference type="PANTHER" id="PTHR42698">
    <property type="entry name" value="GTPASE ERA"/>
    <property type="match status" value="1"/>
</dbReference>
<dbReference type="PANTHER" id="PTHR42698:SF2">
    <property type="entry name" value="GTPASE ERA-LIKE, CHLOROPLASTIC"/>
    <property type="match status" value="1"/>
</dbReference>
<dbReference type="Pfam" id="PF07650">
    <property type="entry name" value="KH_2"/>
    <property type="match status" value="1"/>
</dbReference>
<dbReference type="Pfam" id="PF01926">
    <property type="entry name" value="MMR_HSR1"/>
    <property type="match status" value="1"/>
</dbReference>
<dbReference type="PRINTS" id="PR00326">
    <property type="entry name" value="GTP1OBG"/>
</dbReference>
<dbReference type="SUPFAM" id="SSF52540">
    <property type="entry name" value="P-loop containing nucleoside triphosphate hydrolases"/>
    <property type="match status" value="1"/>
</dbReference>
<dbReference type="SUPFAM" id="SSF54814">
    <property type="entry name" value="Prokaryotic type KH domain (KH-domain type II)"/>
    <property type="match status" value="1"/>
</dbReference>
<dbReference type="PROSITE" id="PS51713">
    <property type="entry name" value="G_ERA"/>
    <property type="match status" value="1"/>
</dbReference>
<keyword id="KW-0150">Chloroplast</keyword>
<keyword id="KW-0342">GTP-binding</keyword>
<keyword id="KW-0547">Nucleotide-binding</keyword>
<keyword id="KW-0934">Plastid</keyword>
<keyword id="KW-1185">Reference proteome</keyword>
<keyword id="KW-0690">Ribosome biogenesis</keyword>
<keyword id="KW-0694">RNA-binding</keyword>
<keyword id="KW-0809">Transit peptide</keyword>